<comment type="similarity">
    <text evidence="1">Belongs to the bacterial ribosomal protein bL32 family.</text>
</comment>
<sequence length="56" mass="6195">MAVPKKKKSKSKRNQRHAVWKGKAAIAAQKAISLGKSILTGKAQGFVYPIEEEEEE</sequence>
<keyword id="KW-0687">Ribonucleoprotein</keyword>
<keyword id="KW-0689">Ribosomal protein</keyword>
<proteinExistence type="inferred from homology"/>
<accession>A8G4Y1</accession>
<dbReference type="EMBL" id="CP000825">
    <property type="protein sequence ID" value="ABV50662.1"/>
    <property type="molecule type" value="Genomic_DNA"/>
</dbReference>
<dbReference type="RefSeq" id="WP_012007748.1">
    <property type="nucleotide sequence ID" value="NC_009840.1"/>
</dbReference>
<dbReference type="SMR" id="A8G4Y1"/>
<dbReference type="STRING" id="93060.P9215_10471"/>
<dbReference type="KEGG" id="pmh:P9215_10471"/>
<dbReference type="eggNOG" id="COG0333">
    <property type="taxonomic scope" value="Bacteria"/>
</dbReference>
<dbReference type="HOGENOM" id="CLU_199882_0_0_3"/>
<dbReference type="Proteomes" id="UP000002014">
    <property type="component" value="Chromosome"/>
</dbReference>
<dbReference type="GO" id="GO:0015934">
    <property type="term" value="C:large ribosomal subunit"/>
    <property type="evidence" value="ECO:0007669"/>
    <property type="project" value="InterPro"/>
</dbReference>
<dbReference type="GO" id="GO:0003735">
    <property type="term" value="F:structural constituent of ribosome"/>
    <property type="evidence" value="ECO:0007669"/>
    <property type="project" value="InterPro"/>
</dbReference>
<dbReference type="GO" id="GO:0006412">
    <property type="term" value="P:translation"/>
    <property type="evidence" value="ECO:0007669"/>
    <property type="project" value="UniProtKB-UniRule"/>
</dbReference>
<dbReference type="HAMAP" id="MF_00340">
    <property type="entry name" value="Ribosomal_bL32"/>
    <property type="match status" value="1"/>
</dbReference>
<dbReference type="InterPro" id="IPR002677">
    <property type="entry name" value="Ribosomal_bL32"/>
</dbReference>
<dbReference type="InterPro" id="IPR044958">
    <property type="entry name" value="Ribosomal_bL32_plant/cyanobact"/>
</dbReference>
<dbReference type="InterPro" id="IPR011332">
    <property type="entry name" value="Ribosomal_zn-bd"/>
</dbReference>
<dbReference type="NCBIfam" id="TIGR01031">
    <property type="entry name" value="rpmF_bact"/>
    <property type="match status" value="1"/>
</dbReference>
<dbReference type="PANTHER" id="PTHR36083">
    <property type="entry name" value="50S RIBOSOMAL PROTEIN L32, CHLOROPLASTIC"/>
    <property type="match status" value="1"/>
</dbReference>
<dbReference type="PANTHER" id="PTHR36083:SF1">
    <property type="entry name" value="LARGE RIBOSOMAL SUBUNIT PROTEIN BL32C"/>
    <property type="match status" value="1"/>
</dbReference>
<dbReference type="Pfam" id="PF01783">
    <property type="entry name" value="Ribosomal_L32p"/>
    <property type="match status" value="1"/>
</dbReference>
<dbReference type="SUPFAM" id="SSF57829">
    <property type="entry name" value="Zn-binding ribosomal proteins"/>
    <property type="match status" value="1"/>
</dbReference>
<reference key="1">
    <citation type="journal article" date="2007" name="PLoS Genet.">
        <title>Patterns and implications of gene gain and loss in the evolution of Prochlorococcus.</title>
        <authorList>
            <person name="Kettler G.C."/>
            <person name="Martiny A.C."/>
            <person name="Huang K."/>
            <person name="Zucker J."/>
            <person name="Coleman M.L."/>
            <person name="Rodrigue S."/>
            <person name="Chen F."/>
            <person name="Lapidus A."/>
            <person name="Ferriera S."/>
            <person name="Johnson J."/>
            <person name="Steglich C."/>
            <person name="Church G.M."/>
            <person name="Richardson P."/>
            <person name="Chisholm S.W."/>
        </authorList>
    </citation>
    <scope>NUCLEOTIDE SEQUENCE [LARGE SCALE GENOMIC DNA]</scope>
    <source>
        <strain>MIT 9215</strain>
    </source>
</reference>
<gene>
    <name evidence="1" type="primary">rpmF</name>
    <name evidence="1" type="synonym">rpl32</name>
    <name type="ordered locus">P9215_10471</name>
</gene>
<protein>
    <recommendedName>
        <fullName evidence="1">Large ribosomal subunit protein bL32</fullName>
    </recommendedName>
    <alternativeName>
        <fullName evidence="2">50S ribosomal protein L32</fullName>
    </alternativeName>
</protein>
<evidence type="ECO:0000255" key="1">
    <source>
        <dbReference type="HAMAP-Rule" id="MF_00340"/>
    </source>
</evidence>
<evidence type="ECO:0000305" key="2"/>
<feature type="chain" id="PRO_1000059822" description="Large ribosomal subunit protein bL32">
    <location>
        <begin position="1"/>
        <end position="56"/>
    </location>
</feature>
<name>RL32_PROM2</name>
<organism>
    <name type="scientific">Prochlorococcus marinus (strain MIT 9215)</name>
    <dbReference type="NCBI Taxonomy" id="93060"/>
    <lineage>
        <taxon>Bacteria</taxon>
        <taxon>Bacillati</taxon>
        <taxon>Cyanobacteriota</taxon>
        <taxon>Cyanophyceae</taxon>
        <taxon>Synechococcales</taxon>
        <taxon>Prochlorococcaceae</taxon>
        <taxon>Prochlorococcus</taxon>
    </lineage>
</organism>